<accession>A9R1E6</accession>
<reference key="1">
    <citation type="journal article" date="2010" name="J. Bacteriol.">
        <title>Genome sequence of the deep-rooted Yersinia pestis strain Angola reveals new insights into the evolution and pangenome of the plague bacterium.</title>
        <authorList>
            <person name="Eppinger M."/>
            <person name="Worsham P.L."/>
            <person name="Nikolich M.P."/>
            <person name="Riley D.R."/>
            <person name="Sebastian Y."/>
            <person name="Mou S."/>
            <person name="Achtman M."/>
            <person name="Lindler L.E."/>
            <person name="Ravel J."/>
        </authorList>
    </citation>
    <scope>NUCLEOTIDE SEQUENCE [LARGE SCALE GENOMIC DNA]</scope>
    <source>
        <strain>Angola</strain>
    </source>
</reference>
<gene>
    <name evidence="1" type="primary">hemL</name>
    <name type="ordered locus">YpAngola_A0995</name>
</gene>
<feature type="chain" id="PRO_1000121934" description="Glutamate-1-semialdehyde 2,1-aminomutase">
    <location>
        <begin position="1"/>
        <end position="426"/>
    </location>
</feature>
<feature type="modified residue" description="N6-(pyridoxal phosphate)lysine" evidence="1">
    <location>
        <position position="265"/>
    </location>
</feature>
<name>GSA_YERPG</name>
<comment type="catalytic activity">
    <reaction evidence="1">
        <text>(S)-4-amino-5-oxopentanoate = 5-aminolevulinate</text>
        <dbReference type="Rhea" id="RHEA:14265"/>
        <dbReference type="ChEBI" id="CHEBI:57501"/>
        <dbReference type="ChEBI" id="CHEBI:356416"/>
        <dbReference type="EC" id="5.4.3.8"/>
    </reaction>
</comment>
<comment type="cofactor">
    <cofactor evidence="1">
        <name>pyridoxal 5'-phosphate</name>
        <dbReference type="ChEBI" id="CHEBI:597326"/>
    </cofactor>
</comment>
<comment type="pathway">
    <text evidence="1">Porphyrin-containing compound metabolism; protoporphyrin-IX biosynthesis; 5-aminolevulinate from L-glutamyl-tRNA(Glu): step 2/2.</text>
</comment>
<comment type="subunit">
    <text evidence="1">Homodimer.</text>
</comment>
<comment type="subcellular location">
    <subcellularLocation>
        <location evidence="1">Cytoplasm</location>
    </subcellularLocation>
</comment>
<comment type="similarity">
    <text evidence="1">Belongs to the class-III pyridoxal-phosphate-dependent aminotransferase family. HemL subfamily.</text>
</comment>
<evidence type="ECO:0000255" key="1">
    <source>
        <dbReference type="HAMAP-Rule" id="MF_00375"/>
    </source>
</evidence>
<protein>
    <recommendedName>
        <fullName evidence="1">Glutamate-1-semialdehyde 2,1-aminomutase</fullName>
        <shortName evidence="1">GSA</shortName>
        <ecNumber evidence="1">5.4.3.8</ecNumber>
    </recommendedName>
    <alternativeName>
        <fullName evidence="1">Glutamate-1-semialdehyde aminotransferase</fullName>
        <shortName evidence="1">GSA-AT</shortName>
    </alternativeName>
</protein>
<organism>
    <name type="scientific">Yersinia pestis bv. Antiqua (strain Angola)</name>
    <dbReference type="NCBI Taxonomy" id="349746"/>
    <lineage>
        <taxon>Bacteria</taxon>
        <taxon>Pseudomonadati</taxon>
        <taxon>Pseudomonadota</taxon>
        <taxon>Gammaproteobacteria</taxon>
        <taxon>Enterobacterales</taxon>
        <taxon>Yersiniaceae</taxon>
        <taxon>Yersinia</taxon>
    </lineage>
</organism>
<dbReference type="EC" id="5.4.3.8" evidence="1"/>
<dbReference type="EMBL" id="CP000901">
    <property type="protein sequence ID" value="ABX88310.1"/>
    <property type="molecule type" value="Genomic_DNA"/>
</dbReference>
<dbReference type="RefSeq" id="WP_002209362.1">
    <property type="nucleotide sequence ID" value="NZ_CP009935.1"/>
</dbReference>
<dbReference type="SMR" id="A9R1E6"/>
<dbReference type="GeneID" id="57975320"/>
<dbReference type="KEGG" id="ypg:YpAngola_A0995"/>
<dbReference type="PATRIC" id="fig|349746.12.peg.1945"/>
<dbReference type="UniPathway" id="UPA00251">
    <property type="reaction ID" value="UER00317"/>
</dbReference>
<dbReference type="GO" id="GO:0005737">
    <property type="term" value="C:cytoplasm"/>
    <property type="evidence" value="ECO:0007669"/>
    <property type="project" value="UniProtKB-SubCell"/>
</dbReference>
<dbReference type="GO" id="GO:0042286">
    <property type="term" value="F:glutamate-1-semialdehyde 2,1-aminomutase activity"/>
    <property type="evidence" value="ECO:0007669"/>
    <property type="project" value="UniProtKB-UniRule"/>
</dbReference>
<dbReference type="GO" id="GO:0030170">
    <property type="term" value="F:pyridoxal phosphate binding"/>
    <property type="evidence" value="ECO:0007669"/>
    <property type="project" value="InterPro"/>
</dbReference>
<dbReference type="GO" id="GO:0008483">
    <property type="term" value="F:transaminase activity"/>
    <property type="evidence" value="ECO:0007669"/>
    <property type="project" value="InterPro"/>
</dbReference>
<dbReference type="GO" id="GO:0006782">
    <property type="term" value="P:protoporphyrinogen IX biosynthetic process"/>
    <property type="evidence" value="ECO:0007669"/>
    <property type="project" value="UniProtKB-UniRule"/>
</dbReference>
<dbReference type="CDD" id="cd00610">
    <property type="entry name" value="OAT_like"/>
    <property type="match status" value="1"/>
</dbReference>
<dbReference type="FunFam" id="3.40.640.10:FF:000021">
    <property type="entry name" value="Glutamate-1-semialdehyde 2,1-aminomutase"/>
    <property type="match status" value="1"/>
</dbReference>
<dbReference type="FunFam" id="3.90.1150.10:FF:000012">
    <property type="entry name" value="Glutamate-1-semialdehyde 2,1-aminomutase"/>
    <property type="match status" value="1"/>
</dbReference>
<dbReference type="Gene3D" id="3.90.1150.10">
    <property type="entry name" value="Aspartate Aminotransferase, domain 1"/>
    <property type="match status" value="1"/>
</dbReference>
<dbReference type="Gene3D" id="3.40.640.10">
    <property type="entry name" value="Type I PLP-dependent aspartate aminotransferase-like (Major domain)"/>
    <property type="match status" value="1"/>
</dbReference>
<dbReference type="HAMAP" id="MF_00375">
    <property type="entry name" value="HemL_aminotrans_3"/>
    <property type="match status" value="1"/>
</dbReference>
<dbReference type="InterPro" id="IPR004639">
    <property type="entry name" value="4pyrrol_synth_GluAld_NH2Trfase"/>
</dbReference>
<dbReference type="InterPro" id="IPR005814">
    <property type="entry name" value="Aminotrans_3"/>
</dbReference>
<dbReference type="InterPro" id="IPR049704">
    <property type="entry name" value="Aminotrans_3_PPA_site"/>
</dbReference>
<dbReference type="InterPro" id="IPR015424">
    <property type="entry name" value="PyrdxlP-dep_Trfase"/>
</dbReference>
<dbReference type="InterPro" id="IPR015421">
    <property type="entry name" value="PyrdxlP-dep_Trfase_major"/>
</dbReference>
<dbReference type="InterPro" id="IPR015422">
    <property type="entry name" value="PyrdxlP-dep_Trfase_small"/>
</dbReference>
<dbReference type="NCBIfam" id="TIGR00713">
    <property type="entry name" value="hemL"/>
    <property type="match status" value="1"/>
</dbReference>
<dbReference type="NCBIfam" id="NF000818">
    <property type="entry name" value="PRK00062.1"/>
    <property type="match status" value="1"/>
</dbReference>
<dbReference type="PANTHER" id="PTHR43713">
    <property type="entry name" value="GLUTAMATE-1-SEMIALDEHYDE 2,1-AMINOMUTASE"/>
    <property type="match status" value="1"/>
</dbReference>
<dbReference type="PANTHER" id="PTHR43713:SF3">
    <property type="entry name" value="GLUTAMATE-1-SEMIALDEHYDE 2,1-AMINOMUTASE 1, CHLOROPLASTIC-RELATED"/>
    <property type="match status" value="1"/>
</dbReference>
<dbReference type="Pfam" id="PF00202">
    <property type="entry name" value="Aminotran_3"/>
    <property type="match status" value="1"/>
</dbReference>
<dbReference type="SUPFAM" id="SSF53383">
    <property type="entry name" value="PLP-dependent transferases"/>
    <property type="match status" value="1"/>
</dbReference>
<dbReference type="PROSITE" id="PS00600">
    <property type="entry name" value="AA_TRANSFER_CLASS_3"/>
    <property type="match status" value="1"/>
</dbReference>
<sequence length="426" mass="45794">MSKSENLYAQAQQLIPGGVNSPVRAFTGVGGIPLFIERADGAYLFDVDGKAYIDYVGSWGPMILGHNHPAIRQAVIEAVERGLSFGAPTEMEVKMAQLVTDLVPTMDMVRMVNSGTEATMSAIRLARGYTGRDKIIKFEGCYHGHADCLLVKAGSGALTLGQPNSPGVPTDFAKHTLTCTYNDLASVRQAFEQYPQEVACIIVEPVAGNMNCIPPLPEFLPGLRALCDEFGALLIIDEVMTGFRVALAGAQDYYHVIPDLTCLGKIIGGGMPVGAFGGRREVMNALAPTGPVYQAGTLSGNPIAMAAGFACLTEISQVGVYETLTELTDSLATGLRHAAKEENIPLVVNHVGGMFGLFFTNADTVTCYQDVMNCDVERFKRFFHLMLEEGVYLAPSAFEAGFMSLAHSNEDIQKTVNAARRCFAKL</sequence>
<keyword id="KW-0963">Cytoplasm</keyword>
<keyword id="KW-0413">Isomerase</keyword>
<keyword id="KW-0627">Porphyrin biosynthesis</keyword>
<keyword id="KW-0663">Pyridoxal phosphate</keyword>
<proteinExistence type="inferred from homology"/>